<protein>
    <recommendedName>
        <fullName evidence="1">NADH-quinone oxidoreductase subunit I</fullName>
        <ecNumber evidence="1">7.1.1.-</ecNumber>
    </recommendedName>
    <alternativeName>
        <fullName evidence="1">NADH dehydrogenase I subunit I</fullName>
    </alternativeName>
    <alternativeName>
        <fullName evidence="1">NDH-1 subunit I</fullName>
    </alternativeName>
</protein>
<evidence type="ECO:0000255" key="1">
    <source>
        <dbReference type="HAMAP-Rule" id="MF_01351"/>
    </source>
</evidence>
<proteinExistence type="inferred from homology"/>
<gene>
    <name evidence="1" type="primary">nuoI</name>
    <name type="ordered locus">ACICU_00716</name>
</gene>
<name>NUOI_ACIBC</name>
<accession>B2HU48</accession>
<sequence>MYKILAGVGSIVRTLFMVFTHGFRKRDTILYPEVPAEEIVPPRYRGRIILTRDPDGEERCVACNLCAVACPVGCISLQKAEKEDGRWYPEFFRINFSRCIFCGMCEEACPTTAIQLTPDFELGEYVRQDLVYEKENLLISGPGKYPDYNFYRVTGMAINGKEKGQAQKESAPIDVRSLLP</sequence>
<comment type="function">
    <text evidence="1">NDH-1 shuttles electrons from NADH, via FMN and iron-sulfur (Fe-S) centers, to quinones in the respiratory chain. The immediate electron acceptor for the enzyme in this species is believed to be ubiquinone. Couples the redox reaction to proton translocation (for every two electrons transferred, four hydrogen ions are translocated across the cytoplasmic membrane), and thus conserves the redox energy in a proton gradient.</text>
</comment>
<comment type="catalytic activity">
    <reaction evidence="1">
        <text>a quinone + NADH + 5 H(+)(in) = a quinol + NAD(+) + 4 H(+)(out)</text>
        <dbReference type="Rhea" id="RHEA:57888"/>
        <dbReference type="ChEBI" id="CHEBI:15378"/>
        <dbReference type="ChEBI" id="CHEBI:24646"/>
        <dbReference type="ChEBI" id="CHEBI:57540"/>
        <dbReference type="ChEBI" id="CHEBI:57945"/>
        <dbReference type="ChEBI" id="CHEBI:132124"/>
    </reaction>
</comment>
<comment type="cofactor">
    <cofactor evidence="1">
        <name>[4Fe-4S] cluster</name>
        <dbReference type="ChEBI" id="CHEBI:49883"/>
    </cofactor>
    <text evidence="1">Binds 2 [4Fe-4S] clusters per subunit.</text>
</comment>
<comment type="subunit">
    <text evidence="1">NDH-1 is composed of 14 different subunits. Subunits NuoA, H, J, K, L, M, N constitute the membrane sector of the complex.</text>
</comment>
<comment type="subcellular location">
    <subcellularLocation>
        <location evidence="1">Cell inner membrane</location>
        <topology evidence="1">Peripheral membrane protein</topology>
    </subcellularLocation>
</comment>
<comment type="similarity">
    <text evidence="1">Belongs to the complex I 23 kDa subunit family.</text>
</comment>
<dbReference type="EC" id="7.1.1.-" evidence="1"/>
<dbReference type="EMBL" id="CP000863">
    <property type="protein sequence ID" value="ACC56028.1"/>
    <property type="molecule type" value="Genomic_DNA"/>
</dbReference>
<dbReference type="RefSeq" id="WP_000276693.1">
    <property type="nucleotide sequence ID" value="NZ_CP031380.1"/>
</dbReference>
<dbReference type="SMR" id="B2HU48"/>
<dbReference type="GeneID" id="92892689"/>
<dbReference type="KEGG" id="abc:ACICU_00716"/>
<dbReference type="HOGENOM" id="CLU_067218_4_3_6"/>
<dbReference type="Proteomes" id="UP000008839">
    <property type="component" value="Chromosome"/>
</dbReference>
<dbReference type="GO" id="GO:0005886">
    <property type="term" value="C:plasma membrane"/>
    <property type="evidence" value="ECO:0007669"/>
    <property type="project" value="UniProtKB-SubCell"/>
</dbReference>
<dbReference type="GO" id="GO:0051539">
    <property type="term" value="F:4 iron, 4 sulfur cluster binding"/>
    <property type="evidence" value="ECO:0007669"/>
    <property type="project" value="UniProtKB-KW"/>
</dbReference>
<dbReference type="GO" id="GO:0005506">
    <property type="term" value="F:iron ion binding"/>
    <property type="evidence" value="ECO:0007669"/>
    <property type="project" value="UniProtKB-UniRule"/>
</dbReference>
<dbReference type="GO" id="GO:0050136">
    <property type="term" value="F:NADH:ubiquinone reductase (non-electrogenic) activity"/>
    <property type="evidence" value="ECO:0007669"/>
    <property type="project" value="UniProtKB-UniRule"/>
</dbReference>
<dbReference type="GO" id="GO:0048038">
    <property type="term" value="F:quinone binding"/>
    <property type="evidence" value="ECO:0007669"/>
    <property type="project" value="UniProtKB-KW"/>
</dbReference>
<dbReference type="GO" id="GO:0009060">
    <property type="term" value="P:aerobic respiration"/>
    <property type="evidence" value="ECO:0007669"/>
    <property type="project" value="TreeGrafter"/>
</dbReference>
<dbReference type="FunFam" id="3.30.70.3270:FF:000002">
    <property type="entry name" value="NADH-quinone oxidoreductase subunit I"/>
    <property type="match status" value="1"/>
</dbReference>
<dbReference type="Gene3D" id="3.30.70.3270">
    <property type="match status" value="1"/>
</dbReference>
<dbReference type="HAMAP" id="MF_01351">
    <property type="entry name" value="NDH1_NuoI"/>
    <property type="match status" value="1"/>
</dbReference>
<dbReference type="InterPro" id="IPR017896">
    <property type="entry name" value="4Fe4S_Fe-S-bd"/>
</dbReference>
<dbReference type="InterPro" id="IPR017900">
    <property type="entry name" value="4Fe4S_Fe_S_CS"/>
</dbReference>
<dbReference type="InterPro" id="IPR010226">
    <property type="entry name" value="NADH_quinone_OxRdtase_chainI"/>
</dbReference>
<dbReference type="NCBIfam" id="TIGR01971">
    <property type="entry name" value="NuoI"/>
    <property type="match status" value="1"/>
</dbReference>
<dbReference type="NCBIfam" id="NF004536">
    <property type="entry name" value="PRK05888.1-1"/>
    <property type="match status" value="1"/>
</dbReference>
<dbReference type="PANTHER" id="PTHR10849:SF20">
    <property type="entry name" value="NADH DEHYDROGENASE [UBIQUINONE] IRON-SULFUR PROTEIN 8, MITOCHONDRIAL"/>
    <property type="match status" value="1"/>
</dbReference>
<dbReference type="PANTHER" id="PTHR10849">
    <property type="entry name" value="NADH DEHYDROGENASE UBIQUINONE IRON-SULFUR PROTEIN 8, MITOCHONDRIAL"/>
    <property type="match status" value="1"/>
</dbReference>
<dbReference type="Pfam" id="PF12838">
    <property type="entry name" value="Fer4_7"/>
    <property type="match status" value="1"/>
</dbReference>
<dbReference type="SUPFAM" id="SSF54862">
    <property type="entry name" value="4Fe-4S ferredoxins"/>
    <property type="match status" value="1"/>
</dbReference>
<dbReference type="PROSITE" id="PS00198">
    <property type="entry name" value="4FE4S_FER_1"/>
    <property type="match status" value="2"/>
</dbReference>
<dbReference type="PROSITE" id="PS51379">
    <property type="entry name" value="4FE4S_FER_2"/>
    <property type="match status" value="2"/>
</dbReference>
<organism>
    <name type="scientific">Acinetobacter baumannii (strain ACICU)</name>
    <dbReference type="NCBI Taxonomy" id="405416"/>
    <lineage>
        <taxon>Bacteria</taxon>
        <taxon>Pseudomonadati</taxon>
        <taxon>Pseudomonadota</taxon>
        <taxon>Gammaproteobacteria</taxon>
        <taxon>Moraxellales</taxon>
        <taxon>Moraxellaceae</taxon>
        <taxon>Acinetobacter</taxon>
        <taxon>Acinetobacter calcoaceticus/baumannii complex</taxon>
    </lineage>
</organism>
<keyword id="KW-0004">4Fe-4S</keyword>
<keyword id="KW-0997">Cell inner membrane</keyword>
<keyword id="KW-1003">Cell membrane</keyword>
<keyword id="KW-0408">Iron</keyword>
<keyword id="KW-0411">Iron-sulfur</keyword>
<keyword id="KW-0472">Membrane</keyword>
<keyword id="KW-0479">Metal-binding</keyword>
<keyword id="KW-0520">NAD</keyword>
<keyword id="KW-0874">Quinone</keyword>
<keyword id="KW-0677">Repeat</keyword>
<keyword id="KW-1278">Translocase</keyword>
<keyword id="KW-0830">Ubiquinone</keyword>
<feature type="chain" id="PRO_1000143630" description="NADH-quinone oxidoreductase subunit I">
    <location>
        <begin position="1"/>
        <end position="180"/>
    </location>
</feature>
<feature type="domain" description="4Fe-4S ferredoxin-type 1" evidence="1">
    <location>
        <begin position="50"/>
        <end position="80"/>
    </location>
</feature>
<feature type="domain" description="4Fe-4S ferredoxin-type 2" evidence="1">
    <location>
        <begin position="90"/>
        <end position="119"/>
    </location>
</feature>
<feature type="binding site" evidence="1">
    <location>
        <position position="60"/>
    </location>
    <ligand>
        <name>[4Fe-4S] cluster</name>
        <dbReference type="ChEBI" id="CHEBI:49883"/>
        <label>1</label>
    </ligand>
</feature>
<feature type="binding site" evidence="1">
    <location>
        <position position="63"/>
    </location>
    <ligand>
        <name>[4Fe-4S] cluster</name>
        <dbReference type="ChEBI" id="CHEBI:49883"/>
        <label>1</label>
    </ligand>
</feature>
<feature type="binding site" evidence="1">
    <location>
        <position position="66"/>
    </location>
    <ligand>
        <name>[4Fe-4S] cluster</name>
        <dbReference type="ChEBI" id="CHEBI:49883"/>
        <label>1</label>
    </ligand>
</feature>
<feature type="binding site" evidence="1">
    <location>
        <position position="70"/>
    </location>
    <ligand>
        <name>[4Fe-4S] cluster</name>
        <dbReference type="ChEBI" id="CHEBI:49883"/>
        <label>2</label>
    </ligand>
</feature>
<feature type="binding site" evidence="1">
    <location>
        <position position="99"/>
    </location>
    <ligand>
        <name>[4Fe-4S] cluster</name>
        <dbReference type="ChEBI" id="CHEBI:49883"/>
        <label>2</label>
    </ligand>
</feature>
<feature type="binding site" evidence="1">
    <location>
        <position position="102"/>
    </location>
    <ligand>
        <name>[4Fe-4S] cluster</name>
        <dbReference type="ChEBI" id="CHEBI:49883"/>
        <label>2</label>
    </ligand>
</feature>
<feature type="binding site" evidence="1">
    <location>
        <position position="105"/>
    </location>
    <ligand>
        <name>[4Fe-4S] cluster</name>
        <dbReference type="ChEBI" id="CHEBI:49883"/>
        <label>2</label>
    </ligand>
</feature>
<feature type="binding site" evidence="1">
    <location>
        <position position="109"/>
    </location>
    <ligand>
        <name>[4Fe-4S] cluster</name>
        <dbReference type="ChEBI" id="CHEBI:49883"/>
        <label>1</label>
    </ligand>
</feature>
<reference key="1">
    <citation type="journal article" date="2008" name="Antimicrob. Agents Chemother.">
        <title>Whole-genome pyrosequencing of an epidemic multidrug-resistant Acinetobacter baumannii strain belonging to the European clone II group.</title>
        <authorList>
            <person name="Iacono M."/>
            <person name="Villa L."/>
            <person name="Fortini D."/>
            <person name="Bordoni R."/>
            <person name="Imperi F."/>
            <person name="Bonnal R.J."/>
            <person name="Sicheritz-Ponten T."/>
            <person name="De Bellis G."/>
            <person name="Visca P."/>
            <person name="Cassone A."/>
            <person name="Carattoli A."/>
        </authorList>
    </citation>
    <scope>NUCLEOTIDE SEQUENCE [LARGE SCALE GENOMIC DNA]</scope>
    <source>
        <strain>ACICU</strain>
    </source>
</reference>